<protein>
    <recommendedName>
        <fullName evidence="1">ATP synthase subunit beta 2</fullName>
        <ecNumber evidence="1">7.1.2.2</ecNumber>
    </recommendedName>
    <alternativeName>
        <fullName evidence="1">ATP synthase F1 sector subunit beta 2</fullName>
    </alternativeName>
    <alternativeName>
        <fullName evidence="1">F-ATPase subunit beta 2</fullName>
    </alternativeName>
</protein>
<feature type="chain" id="PRO_0000339556" description="ATP synthase subunit beta 2">
    <location>
        <begin position="1"/>
        <end position="470"/>
    </location>
</feature>
<feature type="binding site" evidence="1">
    <location>
        <begin position="155"/>
        <end position="162"/>
    </location>
    <ligand>
        <name>ATP</name>
        <dbReference type="ChEBI" id="CHEBI:30616"/>
    </ligand>
</feature>
<name>ATPB2_NITMU</name>
<dbReference type="EC" id="7.1.2.2" evidence="1"/>
<dbReference type="EMBL" id="CP000103">
    <property type="protein sequence ID" value="ABB74959.1"/>
    <property type="molecule type" value="Genomic_DNA"/>
</dbReference>
<dbReference type="RefSeq" id="WP_011380982.1">
    <property type="nucleotide sequence ID" value="NC_007614.1"/>
</dbReference>
<dbReference type="SMR" id="Q2Y8G2"/>
<dbReference type="STRING" id="323848.Nmul_A1661"/>
<dbReference type="KEGG" id="nmu:Nmul_A1661"/>
<dbReference type="eggNOG" id="COG0055">
    <property type="taxonomic scope" value="Bacteria"/>
</dbReference>
<dbReference type="HOGENOM" id="CLU_022398_0_2_4"/>
<dbReference type="OrthoDB" id="9801639at2"/>
<dbReference type="Proteomes" id="UP000002718">
    <property type="component" value="Chromosome"/>
</dbReference>
<dbReference type="GO" id="GO:0005886">
    <property type="term" value="C:plasma membrane"/>
    <property type="evidence" value="ECO:0007669"/>
    <property type="project" value="UniProtKB-SubCell"/>
</dbReference>
<dbReference type="GO" id="GO:0045259">
    <property type="term" value="C:proton-transporting ATP synthase complex"/>
    <property type="evidence" value="ECO:0007669"/>
    <property type="project" value="UniProtKB-KW"/>
</dbReference>
<dbReference type="GO" id="GO:0005524">
    <property type="term" value="F:ATP binding"/>
    <property type="evidence" value="ECO:0007669"/>
    <property type="project" value="UniProtKB-UniRule"/>
</dbReference>
<dbReference type="GO" id="GO:0016887">
    <property type="term" value="F:ATP hydrolysis activity"/>
    <property type="evidence" value="ECO:0007669"/>
    <property type="project" value="InterPro"/>
</dbReference>
<dbReference type="GO" id="GO:0046933">
    <property type="term" value="F:proton-transporting ATP synthase activity, rotational mechanism"/>
    <property type="evidence" value="ECO:0007669"/>
    <property type="project" value="UniProtKB-UniRule"/>
</dbReference>
<dbReference type="GO" id="GO:0046961">
    <property type="term" value="F:proton-transporting ATPase activity, rotational mechanism"/>
    <property type="evidence" value="ECO:0007669"/>
    <property type="project" value="InterPro"/>
</dbReference>
<dbReference type="CDD" id="cd18110">
    <property type="entry name" value="ATP-synt_F1_beta_C"/>
    <property type="match status" value="1"/>
</dbReference>
<dbReference type="CDD" id="cd18115">
    <property type="entry name" value="ATP-synt_F1_beta_N"/>
    <property type="match status" value="1"/>
</dbReference>
<dbReference type="FunFam" id="1.10.1140.10:FF:000006">
    <property type="entry name" value="ATP synthase subunit beta"/>
    <property type="match status" value="1"/>
</dbReference>
<dbReference type="FunFam" id="3.40.50.300:FF:001630">
    <property type="entry name" value="ATP synthase subunit beta"/>
    <property type="match status" value="1"/>
</dbReference>
<dbReference type="Gene3D" id="2.40.10.170">
    <property type="match status" value="1"/>
</dbReference>
<dbReference type="Gene3D" id="1.10.1140.10">
    <property type="entry name" value="Bovine Mitochondrial F1-atpase, Atp Synthase Beta Chain, Chain D, domain 3"/>
    <property type="match status" value="1"/>
</dbReference>
<dbReference type="Gene3D" id="3.40.50.300">
    <property type="entry name" value="P-loop containing nucleotide triphosphate hydrolases"/>
    <property type="match status" value="1"/>
</dbReference>
<dbReference type="HAMAP" id="MF_01347">
    <property type="entry name" value="ATP_synth_beta_bact"/>
    <property type="match status" value="1"/>
</dbReference>
<dbReference type="InterPro" id="IPR003593">
    <property type="entry name" value="AAA+_ATPase"/>
</dbReference>
<dbReference type="InterPro" id="IPR017691">
    <property type="entry name" value="Alt_ATPase_F1_bsu"/>
</dbReference>
<dbReference type="InterPro" id="IPR055190">
    <property type="entry name" value="ATP-synt_VA_C"/>
</dbReference>
<dbReference type="InterPro" id="IPR005722">
    <property type="entry name" value="ATP_synth_F1_bsu"/>
</dbReference>
<dbReference type="InterPro" id="IPR050053">
    <property type="entry name" value="ATPase_alpha/beta_chains"/>
</dbReference>
<dbReference type="InterPro" id="IPR004100">
    <property type="entry name" value="ATPase_F1/V1/A1_a/bsu_N"/>
</dbReference>
<dbReference type="InterPro" id="IPR036121">
    <property type="entry name" value="ATPase_F1/V1/A1_a/bsu_N_sf"/>
</dbReference>
<dbReference type="InterPro" id="IPR000194">
    <property type="entry name" value="ATPase_F1/V1/A1_a/bsu_nucl-bd"/>
</dbReference>
<dbReference type="InterPro" id="IPR024034">
    <property type="entry name" value="ATPase_F1/V1_b/a_C"/>
</dbReference>
<dbReference type="InterPro" id="IPR027417">
    <property type="entry name" value="P-loop_NTPase"/>
</dbReference>
<dbReference type="NCBIfam" id="TIGR03305">
    <property type="entry name" value="alt_F1F0_F1_bet"/>
    <property type="match status" value="1"/>
</dbReference>
<dbReference type="NCBIfam" id="TIGR01039">
    <property type="entry name" value="atpD"/>
    <property type="match status" value="1"/>
</dbReference>
<dbReference type="PANTHER" id="PTHR15184">
    <property type="entry name" value="ATP SYNTHASE"/>
    <property type="match status" value="1"/>
</dbReference>
<dbReference type="PANTHER" id="PTHR15184:SF71">
    <property type="entry name" value="ATP SYNTHASE SUBUNIT BETA, MITOCHONDRIAL"/>
    <property type="match status" value="1"/>
</dbReference>
<dbReference type="Pfam" id="PF00006">
    <property type="entry name" value="ATP-synt_ab"/>
    <property type="match status" value="1"/>
</dbReference>
<dbReference type="Pfam" id="PF02874">
    <property type="entry name" value="ATP-synt_ab_N"/>
    <property type="match status" value="1"/>
</dbReference>
<dbReference type="Pfam" id="PF22919">
    <property type="entry name" value="ATP-synt_VA_C"/>
    <property type="match status" value="1"/>
</dbReference>
<dbReference type="SMART" id="SM00382">
    <property type="entry name" value="AAA"/>
    <property type="match status" value="1"/>
</dbReference>
<dbReference type="SUPFAM" id="SSF47917">
    <property type="entry name" value="C-terminal domain of alpha and beta subunits of F1 ATP synthase"/>
    <property type="match status" value="1"/>
</dbReference>
<dbReference type="SUPFAM" id="SSF50615">
    <property type="entry name" value="N-terminal domain of alpha and beta subunits of F1 ATP synthase"/>
    <property type="match status" value="1"/>
</dbReference>
<dbReference type="SUPFAM" id="SSF52540">
    <property type="entry name" value="P-loop containing nucleoside triphosphate hydrolases"/>
    <property type="match status" value="1"/>
</dbReference>
<gene>
    <name evidence="1" type="primary">atpD2</name>
    <name type="ordered locus">Nmul_A1661</name>
</gene>
<comment type="function">
    <text evidence="1">Produces ATP from ADP in the presence of a proton gradient across the membrane. The catalytic sites are hosted primarily by the beta subunits.</text>
</comment>
<comment type="catalytic activity">
    <reaction evidence="1">
        <text>ATP + H2O + 4 H(+)(in) = ADP + phosphate + 5 H(+)(out)</text>
        <dbReference type="Rhea" id="RHEA:57720"/>
        <dbReference type="ChEBI" id="CHEBI:15377"/>
        <dbReference type="ChEBI" id="CHEBI:15378"/>
        <dbReference type="ChEBI" id="CHEBI:30616"/>
        <dbReference type="ChEBI" id="CHEBI:43474"/>
        <dbReference type="ChEBI" id="CHEBI:456216"/>
        <dbReference type="EC" id="7.1.2.2"/>
    </reaction>
</comment>
<comment type="subunit">
    <text evidence="1">F-type ATPases have 2 components, CF(1) - the catalytic core - and CF(0) - the membrane proton channel. CF(1) has five subunits: alpha(3), beta(3), gamma(1), delta(1), epsilon(1). CF(0) has three main subunits: a(1), b(2) and c(9-12). The alpha and beta chains form an alternating ring which encloses part of the gamma chain. CF(1) is attached to CF(0) by a central stalk formed by the gamma and epsilon chains, while a peripheral stalk is formed by the delta and b chains.</text>
</comment>
<comment type="subcellular location">
    <subcellularLocation>
        <location evidence="1">Cell inner membrane</location>
        <topology evidence="1">Peripheral membrane protein</topology>
    </subcellularLocation>
</comment>
<comment type="similarity">
    <text evidence="1">Belongs to the ATPase alpha/beta chains family.</text>
</comment>
<evidence type="ECO:0000255" key="1">
    <source>
        <dbReference type="HAMAP-Rule" id="MF_01347"/>
    </source>
</evidence>
<sequence length="470" mass="51391">MDAAAPDLGIGIVAAVRGGIVDIRFANRPPSIRSLVRTGKAGEIVIEILSQLDAHRVRGIALTPTQGLARGMLVKDTGGPLRAPVGRATLSRMFDVFGEVIDRKPPPCDAQWRTVHHSPPPLVRRSTRSEIFETGIKIIDVLMPLERGGKAGLLGGAGVGKTILLTEMIHNVAGRHRGVSIFCGIGERCREGEELYRDIMAAGVLENMVMVFGQMNEPPGARFRVAHAALTMAEYFRDDEHRDVLLLVDNIYRFIQAGMEVSGLMGQMPSRMGYQPTMGTELAQLEERIAHTDNGAITSIQAVYVPADDFSDPAAVHAFSHFSASIVLSRKRASEGLYPAIDPLQSGAKMATPSVIGERHYRIAQETRHTLAQYTELKDVIAMLGLEQLSPEDRALVARARRLERFFTQPFFTTEHFTGIKGKLVSLEDALDGCERILRDEYRDLPEQALYMIGKASEAEPGGSAKNASS</sequence>
<keyword id="KW-0066">ATP synthesis</keyword>
<keyword id="KW-0067">ATP-binding</keyword>
<keyword id="KW-0997">Cell inner membrane</keyword>
<keyword id="KW-1003">Cell membrane</keyword>
<keyword id="KW-0139">CF(1)</keyword>
<keyword id="KW-0375">Hydrogen ion transport</keyword>
<keyword id="KW-0406">Ion transport</keyword>
<keyword id="KW-0472">Membrane</keyword>
<keyword id="KW-0547">Nucleotide-binding</keyword>
<keyword id="KW-1185">Reference proteome</keyword>
<keyword id="KW-1278">Translocase</keyword>
<keyword id="KW-0813">Transport</keyword>
<reference key="1">
    <citation type="submission" date="2005-08" db="EMBL/GenBank/DDBJ databases">
        <title>Complete sequence of chromosome 1 of Nitrosospira multiformis ATCC 25196.</title>
        <authorList>
            <person name="Copeland A."/>
            <person name="Lucas S."/>
            <person name="Lapidus A."/>
            <person name="Barry K."/>
            <person name="Detter J.C."/>
            <person name="Glavina T."/>
            <person name="Hammon N."/>
            <person name="Israni S."/>
            <person name="Pitluck S."/>
            <person name="Chain P."/>
            <person name="Malfatti S."/>
            <person name="Shin M."/>
            <person name="Vergez L."/>
            <person name="Schmutz J."/>
            <person name="Larimer F."/>
            <person name="Land M."/>
            <person name="Hauser L."/>
            <person name="Kyrpides N."/>
            <person name="Lykidis A."/>
            <person name="Richardson P."/>
        </authorList>
    </citation>
    <scope>NUCLEOTIDE SEQUENCE [LARGE SCALE GENOMIC DNA]</scope>
    <source>
        <strain>ATCC 25196 / NCIMB 11849 / C 71</strain>
    </source>
</reference>
<organism>
    <name type="scientific">Nitrosospira multiformis (strain ATCC 25196 / NCIMB 11849 / C 71)</name>
    <dbReference type="NCBI Taxonomy" id="323848"/>
    <lineage>
        <taxon>Bacteria</taxon>
        <taxon>Pseudomonadati</taxon>
        <taxon>Pseudomonadota</taxon>
        <taxon>Betaproteobacteria</taxon>
        <taxon>Nitrosomonadales</taxon>
        <taxon>Nitrosomonadaceae</taxon>
        <taxon>Nitrosospira</taxon>
    </lineage>
</organism>
<proteinExistence type="inferred from homology"/>
<accession>Q2Y8G2</accession>